<reference key="1">
    <citation type="journal article" date="2011" name="J. Bacteriol.">
        <title>Complete genome and proteome of Acholeplasma laidlawii.</title>
        <authorList>
            <person name="Lazarev V.N."/>
            <person name="Levitskii S.A."/>
            <person name="Basovskii Y.I."/>
            <person name="Chukin M.M."/>
            <person name="Akopian T.A."/>
            <person name="Vereshchagin V.V."/>
            <person name="Kostrjukova E.S."/>
            <person name="Kovaleva G.Y."/>
            <person name="Kazanov M.D."/>
            <person name="Malko D.B."/>
            <person name="Vitreschak A.G."/>
            <person name="Sernova N.V."/>
            <person name="Gelfand M.S."/>
            <person name="Demina I.A."/>
            <person name="Serebryakova M.V."/>
            <person name="Galyamina M.A."/>
            <person name="Vtyurin N.N."/>
            <person name="Rogov S.I."/>
            <person name="Alexeev D.G."/>
            <person name="Ladygina V.G."/>
            <person name="Govorun V.M."/>
        </authorList>
    </citation>
    <scope>NUCLEOTIDE SEQUENCE [LARGE SCALE GENOMIC DNA]</scope>
    <source>
        <strain>PG-8A</strain>
    </source>
</reference>
<comment type="function">
    <text evidence="1">Required for rescue of stalled ribosomes mediated by trans-translation. Binds to transfer-messenger RNA (tmRNA), required for stable association of tmRNA with ribosomes. tmRNA and SmpB together mimic tRNA shape, replacing the anticodon stem-loop with SmpB. tmRNA is encoded by the ssrA gene; the 2 termini fold to resemble tRNA(Ala) and it encodes a 'tag peptide', a short internal open reading frame. During trans-translation Ala-aminoacylated tmRNA acts like a tRNA, entering the A-site of stalled ribosomes, displacing the stalled mRNA. The ribosome then switches to translate the ORF on the tmRNA; the nascent peptide is terminated with the 'tag peptide' encoded by the tmRNA and targeted for degradation. The ribosome is freed to recommence translation, which seems to be the essential function of trans-translation.</text>
</comment>
<comment type="subcellular location">
    <subcellularLocation>
        <location evidence="1">Cytoplasm</location>
    </subcellularLocation>
    <text evidence="1">The tmRNA-SmpB complex associates with stalled 70S ribosomes.</text>
</comment>
<comment type="similarity">
    <text evidence="1">Belongs to the SmpB family.</text>
</comment>
<name>SSRP_ACHLI</name>
<proteinExistence type="inferred from homology"/>
<organism>
    <name type="scientific">Acholeplasma laidlawii (strain PG-8A)</name>
    <dbReference type="NCBI Taxonomy" id="441768"/>
    <lineage>
        <taxon>Bacteria</taxon>
        <taxon>Bacillati</taxon>
        <taxon>Mycoplasmatota</taxon>
        <taxon>Mollicutes</taxon>
        <taxon>Acholeplasmatales</taxon>
        <taxon>Acholeplasmataceae</taxon>
        <taxon>Acholeplasma</taxon>
    </lineage>
</organism>
<feature type="chain" id="PRO_0000331012" description="SsrA-binding protein">
    <location>
        <begin position="1"/>
        <end position="149"/>
    </location>
</feature>
<protein>
    <recommendedName>
        <fullName evidence="1">SsrA-binding protein</fullName>
    </recommendedName>
    <alternativeName>
        <fullName evidence="1">Small protein B</fullName>
    </alternativeName>
</protein>
<dbReference type="EMBL" id="CP000896">
    <property type="protein sequence ID" value="ABX81027.1"/>
    <property type="molecule type" value="Genomic_DNA"/>
</dbReference>
<dbReference type="RefSeq" id="WP_012242358.1">
    <property type="nucleotide sequence ID" value="NC_010163.1"/>
</dbReference>
<dbReference type="SMR" id="A9NF97"/>
<dbReference type="STRING" id="441768.ACL_0406"/>
<dbReference type="GeneID" id="41338588"/>
<dbReference type="KEGG" id="acl:ACL_0406"/>
<dbReference type="eggNOG" id="COG0691">
    <property type="taxonomic scope" value="Bacteria"/>
</dbReference>
<dbReference type="HOGENOM" id="CLU_108953_0_1_14"/>
<dbReference type="OrthoDB" id="9805462at2"/>
<dbReference type="Proteomes" id="UP000008558">
    <property type="component" value="Chromosome"/>
</dbReference>
<dbReference type="GO" id="GO:0005829">
    <property type="term" value="C:cytosol"/>
    <property type="evidence" value="ECO:0007669"/>
    <property type="project" value="TreeGrafter"/>
</dbReference>
<dbReference type="GO" id="GO:0003723">
    <property type="term" value="F:RNA binding"/>
    <property type="evidence" value="ECO:0007669"/>
    <property type="project" value="UniProtKB-UniRule"/>
</dbReference>
<dbReference type="GO" id="GO:0070929">
    <property type="term" value="P:trans-translation"/>
    <property type="evidence" value="ECO:0007669"/>
    <property type="project" value="UniProtKB-UniRule"/>
</dbReference>
<dbReference type="CDD" id="cd09294">
    <property type="entry name" value="SmpB"/>
    <property type="match status" value="1"/>
</dbReference>
<dbReference type="Gene3D" id="2.40.280.10">
    <property type="match status" value="1"/>
</dbReference>
<dbReference type="HAMAP" id="MF_00023">
    <property type="entry name" value="SmpB"/>
    <property type="match status" value="1"/>
</dbReference>
<dbReference type="InterPro" id="IPR023620">
    <property type="entry name" value="SmpB"/>
</dbReference>
<dbReference type="InterPro" id="IPR000037">
    <property type="entry name" value="SsrA-bd_prot"/>
</dbReference>
<dbReference type="InterPro" id="IPR020081">
    <property type="entry name" value="SsrA-bd_prot_CS"/>
</dbReference>
<dbReference type="NCBIfam" id="NF003843">
    <property type="entry name" value="PRK05422.1"/>
    <property type="match status" value="1"/>
</dbReference>
<dbReference type="NCBIfam" id="TIGR00086">
    <property type="entry name" value="smpB"/>
    <property type="match status" value="1"/>
</dbReference>
<dbReference type="PANTHER" id="PTHR30308:SF2">
    <property type="entry name" value="SSRA-BINDING PROTEIN"/>
    <property type="match status" value="1"/>
</dbReference>
<dbReference type="PANTHER" id="PTHR30308">
    <property type="entry name" value="TMRNA-BINDING COMPONENT OF TRANS-TRANSLATION TAGGING COMPLEX"/>
    <property type="match status" value="1"/>
</dbReference>
<dbReference type="Pfam" id="PF01668">
    <property type="entry name" value="SmpB"/>
    <property type="match status" value="1"/>
</dbReference>
<dbReference type="SUPFAM" id="SSF74982">
    <property type="entry name" value="Small protein B (SmpB)"/>
    <property type="match status" value="1"/>
</dbReference>
<dbReference type="PROSITE" id="PS01317">
    <property type="entry name" value="SSRP"/>
    <property type="match status" value="1"/>
</dbReference>
<gene>
    <name evidence="1" type="primary">smpB</name>
    <name type="ordered locus">ACL_0406</name>
</gene>
<accession>A9NF97</accession>
<keyword id="KW-0963">Cytoplasm</keyword>
<keyword id="KW-1185">Reference proteome</keyword>
<keyword id="KW-0694">RNA-binding</keyword>
<sequence length="149" mass="17207">MKIITQNKKAHFEYFIEQKFVAGIKLQGSEVKSIRAGKCSINEAYITFRNGEVFILNMHIAKFDASSIFNHEETRTRKLLLNRSEIDKLMGAQTRDGMTIIPLTVELHEGLIKVVIALAKGKKLFDKRETIKERDIKREQQQSLKGKMR</sequence>
<evidence type="ECO:0000255" key="1">
    <source>
        <dbReference type="HAMAP-Rule" id="MF_00023"/>
    </source>
</evidence>